<evidence type="ECO:0000255" key="1">
    <source>
        <dbReference type="HAMAP-Rule" id="MF_04056"/>
    </source>
</evidence>
<evidence type="ECO:0000256" key="2">
    <source>
        <dbReference type="SAM" id="MobiDB-lite"/>
    </source>
</evidence>
<evidence type="ECO:0000305" key="3"/>
<gene>
    <name evidence="1" type="primary">L2</name>
</gene>
<organismHost>
    <name type="scientific">Pantherophis guttatus</name>
    <name type="common">Corn snake</name>
    <name type="synonym">Elaphe guttata</name>
    <dbReference type="NCBI Taxonomy" id="94885"/>
</organismHost>
<reference key="1">
    <citation type="journal article" date="2002" name="J. Gen. Virol.">
        <title>Genetic analysis of an adenovirus isolated from corn snake (Elaphe guttata) implies common origin with the members of the proposed new genus Atadenovirus.</title>
        <authorList>
            <person name="Farkas S.L."/>
            <person name="Benko M."/>
            <person name="Elo P.T."/>
            <person name="Ursu K."/>
            <person name="Dan A."/>
            <person name="Ahne W."/>
            <person name="Harrach B."/>
        </authorList>
    </citation>
    <scope>NUCLEOTIDE SEQUENCE [GENOMIC DNA]</scope>
</reference>
<comment type="function">
    <text evidence="1">Plays a role in the inhibition of host immune response within the nucleus. Interacts with cellular nucleosomes and immobilizes the host immune danger signal HMGB1 on chromatin. In turn, prevents HMGB1 release out of the cell and thus decreases inflammation. Also plays a role in the wrapping and condensation of the viral DNA. May also promote viral genome import into the nucleus.</text>
</comment>
<comment type="subunit">
    <text evidence="1">Interacts with the core-capsid bridging protein; this interaction bridges the virus core to the capsid. Interacts with host NPM1; this interaction might play a role in placing the pre-histone-like nucleoprotein on the viral DNA or regulating viral gene expression. Interacts with host HMGB1; this interaction inhibits host immune response.</text>
</comment>
<comment type="subcellular location">
    <molecule>Histone-like nucleoprotein</molecule>
    <subcellularLocation>
        <location evidence="1">Virion</location>
    </subcellularLocation>
    <text evidence="1">Located inside the capsid in association with the viral DNA (core). Present in about 1070 copies per virion.</text>
</comment>
<comment type="subcellular location">
    <molecule>Pre-histone-like nucleoprotein</molecule>
    <subcellularLocation>
        <location evidence="1">Host nucleus</location>
        <location evidence="1">Host nucleolus</location>
    </subcellularLocation>
</comment>
<comment type="induction">
    <text evidence="1">Expressed in the late phase of the viral replicative cycle.</text>
</comment>
<comment type="PTM">
    <text evidence="1">Cleaved near the N-terminus by the viral protease during virion maturation to form the mature protein.</text>
</comment>
<comment type="miscellaneous">
    <text evidence="1">All late proteins expressed from the major late promoter are produced by alternative splicing and alternative polyadenylation of the same gene giving rise to non-overlapping ORFs. A leader sequence is present in the N-terminus of all these mRNAs and is recognized by the viral shutoff protein to provide expression although conventional translation via ribosome scanning from the cap has been shut off in the host cell.</text>
</comment>
<comment type="similarity">
    <text evidence="1 3">Belongs to the adenoviridae histone-like nucleoprotein family.</text>
</comment>
<feature type="initiator methionine" description="Removed" evidence="1">
    <location>
        <position position="1"/>
    </location>
</feature>
<feature type="chain" id="PRO_0000439845" description="Pre-histone-like nucleoprotein" evidence="1">
    <location>
        <begin position="2"/>
        <end position="115"/>
    </location>
</feature>
<feature type="propeptide" id="PRO_0000439846" evidence="1">
    <location>
        <begin position="2"/>
        <end position="23"/>
    </location>
</feature>
<feature type="chain" id="PRO_0000425940" description="Histone-like nucleoprotein" evidence="1">
    <location>
        <begin position="24"/>
        <end position="115"/>
    </location>
</feature>
<feature type="region of interest" description="Disordered" evidence="2">
    <location>
        <begin position="85"/>
        <end position="115"/>
    </location>
</feature>
<feature type="short sequence motif" description="Nuclear localization signal" evidence="1">
    <location>
        <begin position="114" status="uncertain"/>
        <end position="115"/>
    </location>
</feature>
<feature type="compositionally biased region" description="Basic residues" evidence="2">
    <location>
        <begin position="85"/>
        <end position="99"/>
    </location>
</feature>
<protein>
    <recommendedName>
        <fullName evidence="1">Pre-histone-like nucleoprotein</fullName>
    </recommendedName>
    <alternativeName>
        <fullName evidence="1">Pre-core protein VII</fullName>
        <shortName evidence="1">pVII</shortName>
    </alternativeName>
    <component>
        <recommendedName>
            <fullName evidence="1">Histone-like nucleoprotein</fullName>
            <shortName evidence="1">NP</shortName>
        </recommendedName>
        <alternativeName>
            <fullName evidence="1">Core protein VII</fullName>
        </alternativeName>
    </component>
</protein>
<accession>Q8JN70</accession>
<proteinExistence type="inferred from homology"/>
<name>NP_ADES1</name>
<keyword id="KW-0238">DNA-binding</keyword>
<keyword id="KW-1048">Host nucleus</keyword>
<keyword id="KW-0945">Host-virus interaction</keyword>
<keyword id="KW-0426">Late protein</keyword>
<keyword id="KW-0597">Phosphoprotein</keyword>
<keyword id="KW-1185">Reference proteome</keyword>
<keyword id="KW-1163">Viral penetration into host nucleus</keyword>
<keyword id="KW-0946">Virion</keyword>
<keyword id="KW-1160">Virus entry into host cell</keyword>
<dbReference type="EMBL" id="DQ106414">
    <property type="protein sequence ID" value="AAL92449.1"/>
    <property type="molecule type" value="Genomic_DNA"/>
</dbReference>
<dbReference type="RefSeq" id="YP_001552252.1">
    <property type="nucleotide sequence ID" value="NC_009989.1"/>
</dbReference>
<dbReference type="KEGG" id="vg:10973894"/>
<dbReference type="OrthoDB" id="28265at10239"/>
<dbReference type="Proteomes" id="UP000136605">
    <property type="component" value="Genome"/>
</dbReference>
<dbReference type="GO" id="GO:0043657">
    <property type="term" value="C:host cell"/>
    <property type="evidence" value="ECO:0007669"/>
    <property type="project" value="GOC"/>
</dbReference>
<dbReference type="GO" id="GO:0044196">
    <property type="term" value="C:host cell nucleolus"/>
    <property type="evidence" value="ECO:0007669"/>
    <property type="project" value="UniProtKB-SubCell"/>
</dbReference>
<dbReference type="GO" id="GO:0019028">
    <property type="term" value="C:viral capsid"/>
    <property type="evidence" value="ECO:0007669"/>
    <property type="project" value="InterPro"/>
</dbReference>
<dbReference type="GO" id="GO:0003677">
    <property type="term" value="F:DNA binding"/>
    <property type="evidence" value="ECO:0007669"/>
    <property type="project" value="UniProtKB-UniRule"/>
</dbReference>
<dbReference type="GO" id="GO:0046718">
    <property type="term" value="P:symbiont entry into host cell"/>
    <property type="evidence" value="ECO:0007669"/>
    <property type="project" value="UniProtKB-UniRule"/>
</dbReference>
<dbReference type="GO" id="GO:0075732">
    <property type="term" value="P:viral penetration into host nucleus"/>
    <property type="evidence" value="ECO:0007669"/>
    <property type="project" value="UniProtKB-UniRule"/>
</dbReference>
<dbReference type="HAMAP" id="MF_04056">
    <property type="entry name" value="ADV_PVII"/>
    <property type="match status" value="1"/>
</dbReference>
<dbReference type="InterPro" id="IPR004912">
    <property type="entry name" value="Adeno_VII"/>
</dbReference>
<dbReference type="Pfam" id="PF03228">
    <property type="entry name" value="Adeno_VII"/>
    <property type="match status" value="1"/>
</dbReference>
<sequence length="115" mass="13459">MPILISPSDNTGWGLGKLRIRATGLTFTDSTPVSVRHYFRDSGGQRNGRATRAHLRRNLKKYRRKHDRRTHTRRVQPDVILIKAGRRTARSARRRSARKSRSEKTGPRIRYTRRI</sequence>
<organism>
    <name type="scientific">Snake adenovirus serotype 1</name>
    <name type="common">SnAdV-1</name>
    <dbReference type="NCBI Taxonomy" id="189830"/>
    <lineage>
        <taxon>Viruses</taxon>
        <taxon>Varidnaviria</taxon>
        <taxon>Bamfordvirae</taxon>
        <taxon>Preplasmiviricota</taxon>
        <taxon>Tectiliviricetes</taxon>
        <taxon>Rowavirales</taxon>
        <taxon>Adenoviridae</taxon>
        <taxon>Atadenovirus</taxon>
        <taxon>Snake atadenovirus A</taxon>
    </lineage>
</organism>